<gene>
    <name type="primary">VPS10</name>
    <name type="ORF">HCDG_03869</name>
</gene>
<keyword id="KW-0325">Glycoprotein</keyword>
<keyword id="KW-0333">Golgi apparatus</keyword>
<keyword id="KW-0472">Membrane</keyword>
<keyword id="KW-0653">Protein transport</keyword>
<keyword id="KW-0675">Receptor</keyword>
<keyword id="KW-1185">Reference proteome</keyword>
<keyword id="KW-0677">Repeat</keyword>
<keyword id="KW-0732">Signal</keyword>
<keyword id="KW-0812">Transmembrane</keyword>
<keyword id="KW-1133">Transmembrane helix</keyword>
<keyword id="KW-0813">Transport</keyword>
<reference key="1">
    <citation type="submission" date="2009-05" db="EMBL/GenBank/DDBJ databases">
        <title>The genome sequence of Ajellomyces capsulatus strain H143.</title>
        <authorList>
            <person name="Champion M."/>
            <person name="Cuomo C.A."/>
            <person name="Ma L.-J."/>
            <person name="Henn M.R."/>
            <person name="Sil A."/>
            <person name="Goldman B."/>
            <person name="Young S.K."/>
            <person name="Kodira C.D."/>
            <person name="Zeng Q."/>
            <person name="Koehrsen M."/>
            <person name="Alvarado L."/>
            <person name="Berlin A.M."/>
            <person name="Borenstein D."/>
            <person name="Chen Z."/>
            <person name="Engels R."/>
            <person name="Freedman E."/>
            <person name="Gellesch M."/>
            <person name="Goldberg J."/>
            <person name="Griggs A."/>
            <person name="Gujja S."/>
            <person name="Heiman D.I."/>
            <person name="Hepburn T.A."/>
            <person name="Howarth C."/>
            <person name="Jen D."/>
            <person name="Larson L."/>
            <person name="Lewis B."/>
            <person name="Mehta T."/>
            <person name="Park D."/>
            <person name="Pearson M."/>
            <person name="Roberts A."/>
            <person name="Saif S."/>
            <person name="Shea T.D."/>
            <person name="Shenoy N."/>
            <person name="Sisk P."/>
            <person name="Stolte C."/>
            <person name="Sykes S."/>
            <person name="Walk T."/>
            <person name="White J."/>
            <person name="Yandava C."/>
            <person name="Klein B."/>
            <person name="McEwen J.G."/>
            <person name="Puccia R."/>
            <person name="Goldman G.H."/>
            <person name="Felipe M.S."/>
            <person name="Nino-Vega G."/>
            <person name="San-Blas G."/>
            <person name="Taylor J.W."/>
            <person name="Mendoza L."/>
            <person name="Galagan J.E."/>
            <person name="Nusbaum C."/>
            <person name="Birren B.W."/>
        </authorList>
    </citation>
    <scope>NUCLEOTIDE SEQUENCE [LARGE SCALE GENOMIC DNA]</scope>
    <source>
        <strain>H143</strain>
    </source>
</reference>
<organism>
    <name type="scientific">Ajellomyces capsulatus (strain H143)</name>
    <name type="common">Darling's disease fungus</name>
    <name type="synonym">Histoplasma capsulatum</name>
    <dbReference type="NCBI Taxonomy" id="544712"/>
    <lineage>
        <taxon>Eukaryota</taxon>
        <taxon>Fungi</taxon>
        <taxon>Dikarya</taxon>
        <taxon>Ascomycota</taxon>
        <taxon>Pezizomycotina</taxon>
        <taxon>Eurotiomycetes</taxon>
        <taxon>Eurotiomycetidae</taxon>
        <taxon>Onygenales</taxon>
        <taxon>Ajellomycetaceae</taxon>
        <taxon>Histoplasma</taxon>
    </lineage>
</organism>
<accession>C6HAY7</accession>
<comment type="function">
    <text evidence="1">Functions as a sorting receptor in the Golgi compartment required for the intracellular sorting and delivery of soluble vacuolar proteins, like carboxypeptidase Y (CPY) and proteinase A. Executes multiple rounds of sorting by cycling between the late Golgi and a prevacuolar endosome-like compartment (By similarity).</text>
</comment>
<comment type="subcellular location">
    <subcellularLocation>
        <location evidence="1">Golgi apparatus</location>
        <location evidence="1">trans-Golgi network membrane</location>
        <topology evidence="1">Multi-pass membrane protein</topology>
    </subcellularLocation>
    <subcellularLocation>
        <location evidence="1">Prevacuolar compartment membrane</location>
        <topology evidence="1">Multi-pass membrane protein</topology>
    </subcellularLocation>
    <text evidence="1">Cycles between the Golgi apparatus and the prevacuolar compartment.</text>
</comment>
<comment type="similarity">
    <text evidence="4">Belongs to the VPS10-related sortilin family.</text>
</comment>
<name>VPS10_AJECH</name>
<feature type="signal peptide" evidence="2">
    <location>
        <begin position="1"/>
        <end position="21"/>
    </location>
</feature>
<feature type="chain" id="PRO_0000407495" description="Vacuolar protein sorting/targeting protein 10">
    <location>
        <begin position="22"/>
        <end position="1420"/>
    </location>
</feature>
<feature type="topological domain" description="Lumenal" evidence="2">
    <location>
        <begin position="22"/>
        <end position="1284"/>
    </location>
</feature>
<feature type="transmembrane region" description="Helical" evidence="2">
    <location>
        <begin position="1285"/>
        <end position="1305"/>
    </location>
</feature>
<feature type="topological domain" description="Cytoplasmic" evidence="2">
    <location>
        <begin position="1306"/>
        <end position="1331"/>
    </location>
</feature>
<feature type="transmembrane region" description="Helical" evidence="2">
    <location>
        <begin position="1332"/>
        <end position="1352"/>
    </location>
</feature>
<feature type="topological domain" description="Lumenal" evidence="2">
    <location>
        <begin position="1353"/>
        <end position="1420"/>
    </location>
</feature>
<feature type="repeat" description="BNR 1">
    <location>
        <begin position="61"/>
        <end position="71"/>
    </location>
</feature>
<feature type="repeat" description="BNR 2">
    <location>
        <begin position="377"/>
        <end position="386"/>
    </location>
</feature>
<feature type="repeat" description="BNR 3">
    <location>
        <begin position="644"/>
        <end position="654"/>
    </location>
</feature>
<feature type="repeat" description="BNR 4">
    <location>
        <begin position="1028"/>
        <end position="1038"/>
    </location>
</feature>
<feature type="repeat" description="BNR 5">
    <location>
        <begin position="1070"/>
        <end position="1079"/>
    </location>
</feature>
<feature type="region of interest" description="Disordered" evidence="3">
    <location>
        <begin position="1397"/>
        <end position="1420"/>
    </location>
</feature>
<feature type="compositionally biased region" description="Acidic residues" evidence="3">
    <location>
        <begin position="1397"/>
        <end position="1414"/>
    </location>
</feature>
<feature type="glycosylation site" description="N-linked (GlcNAc...) asparagine" evidence="2">
    <location>
        <position position="271"/>
    </location>
</feature>
<feature type="glycosylation site" description="N-linked (GlcNAc...) asparagine" evidence="2">
    <location>
        <position position="321"/>
    </location>
</feature>
<feature type="glycosylation site" description="N-linked (GlcNAc...) asparagine" evidence="2">
    <location>
        <position position="893"/>
    </location>
</feature>
<proteinExistence type="inferred from homology"/>
<dbReference type="EMBL" id="GG692422">
    <property type="protein sequence ID" value="EER42410.1"/>
    <property type="molecule type" value="Genomic_DNA"/>
</dbReference>
<dbReference type="SMR" id="C6HAY7"/>
<dbReference type="STRING" id="544712.C6HAY7"/>
<dbReference type="GlyCosmos" id="C6HAY7">
    <property type="glycosylation" value="3 sites, No reported glycans"/>
</dbReference>
<dbReference type="VEuPathDB" id="FungiDB:HCDG_03869"/>
<dbReference type="HOGENOM" id="CLU_000700_0_0_1"/>
<dbReference type="OMA" id="ATMSEFI"/>
<dbReference type="OrthoDB" id="2934at299071"/>
<dbReference type="Proteomes" id="UP000002624">
    <property type="component" value="Unassembled WGS sequence"/>
</dbReference>
<dbReference type="GO" id="GO:0005829">
    <property type="term" value="C:cytosol"/>
    <property type="evidence" value="ECO:0007669"/>
    <property type="project" value="GOC"/>
</dbReference>
<dbReference type="GO" id="GO:0005794">
    <property type="term" value="C:Golgi apparatus"/>
    <property type="evidence" value="ECO:0007669"/>
    <property type="project" value="UniProtKB-SubCell"/>
</dbReference>
<dbReference type="GO" id="GO:0016020">
    <property type="term" value="C:membrane"/>
    <property type="evidence" value="ECO:0007669"/>
    <property type="project" value="UniProtKB-KW"/>
</dbReference>
<dbReference type="GO" id="GO:0006895">
    <property type="term" value="P:Golgi to endosome transport"/>
    <property type="evidence" value="ECO:0007669"/>
    <property type="project" value="TreeGrafter"/>
</dbReference>
<dbReference type="GO" id="GO:0006896">
    <property type="term" value="P:Golgi to vacuole transport"/>
    <property type="evidence" value="ECO:0007669"/>
    <property type="project" value="TreeGrafter"/>
</dbReference>
<dbReference type="GO" id="GO:0006623">
    <property type="term" value="P:protein targeting to vacuole"/>
    <property type="evidence" value="ECO:0007669"/>
    <property type="project" value="TreeGrafter"/>
</dbReference>
<dbReference type="FunFam" id="3.30.60.270:FF:000005">
    <property type="entry name" value="Sortilin"/>
    <property type="match status" value="1"/>
</dbReference>
<dbReference type="Gene3D" id="2.10.70.80">
    <property type="match status" value="1"/>
</dbReference>
<dbReference type="Gene3D" id="3.30.60.270">
    <property type="match status" value="2"/>
</dbReference>
<dbReference type="Gene3D" id="2.130.10.10">
    <property type="entry name" value="YVTN repeat-like/Quinoprotein amine dehydrogenase"/>
    <property type="match status" value="2"/>
</dbReference>
<dbReference type="InterPro" id="IPR031777">
    <property type="entry name" value="Sortilin_C"/>
</dbReference>
<dbReference type="InterPro" id="IPR031778">
    <property type="entry name" value="Sortilin_N"/>
</dbReference>
<dbReference type="InterPro" id="IPR006581">
    <property type="entry name" value="VPS10"/>
</dbReference>
<dbReference type="InterPro" id="IPR050310">
    <property type="entry name" value="VPS10-sortilin"/>
</dbReference>
<dbReference type="InterPro" id="IPR015943">
    <property type="entry name" value="WD40/YVTN_repeat-like_dom_sf"/>
</dbReference>
<dbReference type="PANTHER" id="PTHR12106">
    <property type="entry name" value="SORTILIN RELATED"/>
    <property type="match status" value="1"/>
</dbReference>
<dbReference type="PANTHER" id="PTHR12106:SF27">
    <property type="entry name" value="SORTILIN-RELATED RECEPTOR"/>
    <property type="match status" value="1"/>
</dbReference>
<dbReference type="Pfam" id="PF15902">
    <property type="entry name" value="Sortilin-Vps10"/>
    <property type="match status" value="2"/>
</dbReference>
<dbReference type="Pfam" id="PF15901">
    <property type="entry name" value="Sortilin_C"/>
    <property type="match status" value="1"/>
</dbReference>
<dbReference type="SMART" id="SM00602">
    <property type="entry name" value="VPS10"/>
    <property type="match status" value="2"/>
</dbReference>
<dbReference type="SUPFAM" id="SSF110296">
    <property type="entry name" value="Oligoxyloglucan reducing end-specific cellobiohydrolase"/>
    <property type="match status" value="2"/>
</dbReference>
<evidence type="ECO:0000250" key="1"/>
<evidence type="ECO:0000255" key="2"/>
<evidence type="ECO:0000256" key="3">
    <source>
        <dbReference type="SAM" id="MobiDB-lite"/>
    </source>
</evidence>
<evidence type="ECO:0000305" key="4"/>
<protein>
    <recommendedName>
        <fullName>Vacuolar protein sorting/targeting protein 10</fullName>
    </recommendedName>
    <alternativeName>
        <fullName>Carboxypeptidase Y receptor</fullName>
        <shortName>CPY receptor</shortName>
    </alternativeName>
    <alternativeName>
        <fullName>Sortilin VPS10</fullName>
    </alternativeName>
    <alternativeName>
        <fullName>Vacuolar carboxypeptidase sorting receptor VPS10</fullName>
    </alternativeName>
</protein>
<sequence length="1420" mass="159138">MILRRLLLAGSLLLATAFTSAKKADGPKISVTKFKDEPVNLFYFDDSDTVMFQDGKNGDVYVSRDAGANWDIVDVSGMRGKAWSLLPHPTDRTKAYIMSNGGTHWVTEDQAKSWREFTVDADLSRYEYPLVFHGKDSNRVMLLGHKCNGLDCKEKTYYTTDGFKTAHLLMENGRHCAWAVSTPTFGEGLDLPKEVNDRIFCVVSGLHSSWAEANRLLYSDRFFKDEQGTEVPLDNGRAVSGVIRTASVQKYILAATKSARTNELALFVTDNASTWHRTEFDGHRVEEDAYTILESTSYSLQVDVVSTYSSTIGTLFTSNSNGTYFTRNIEHTNRNMYGFVDFEKISSIQGIILVNTVKNWEDVEKSNGVQKKVISKISFDDGRTFQPLKVGKHDLHLHSVTDATNSGRVFSSPAPGLVMGVGNTGGHLKDYLDGDLFVSDDAGINLEEKLWTMLINMNSVIKASNWHKASLPDGVQIRAKVLTTAPGSTTLKFLLLGSAKADIGMEYYIISIDFAEMEDALVRRKTSKIGCQIERENEPDADGHKHPDAPEGVCKNPDDKFTGSSGFRLIPGNVCIREGGVDLDKQTERVCSETFKNPPAGQIVVEKSFFTADYYKDYFYLERKESSKGEDETVIMITSEQQIFLSRDHGKKWKQILEEEKITRIEPHRFFDDVAYFLTNNGDGWYTLDRGDTFRKFKAPLPPNQDKLPVLSFHPDRRDWLIWTGADECNGNGGNCHSVAYYTTNLGGEWHFLMRYVRRCEFISRDARGSSDKLVFCEQFENENPSNKHLQLLSTEDWFAEKRLHYSNILDFATMQEFIIVAIRGENSQDSLRIGVSIDGKTFADAELPANVQIPIQRAYTVLESRTHAAFLHVTINNIEDHEYGSIIKSNSNGTSYVLSLSAVNRNSRGYADFEKMQGLEGVAMANVVGNVADVENGAAKKFRTMITHNDGAEWTLMRPPDKDSEGRSYACSTKGGKPTDACALHLHSYTERADPRDTYSSPSAVGIMIGTGNVGDYLSLKSKADTFITRDAGITWEEVKKGKYQWEFGDSGSIIVLVPESTPTKTLLYSLDEGRSWKDFEFSEVEMQIQDISTVPSDTSRNFLLWGKEVGQGKKPGIATVNIDFSGLKERSKQCVLDEKKPEADDYYLWEPKHPLQPNGCLFGHRAKYHRKRPDKDCYNGRELQHLDSIGDICECTRSDYECDYNYEPQSDGSCARVAGLEPLDPKLVCTENPKAVEWYEPTGYRRIPLTKCQGGKQLNHIVAHPCPNKEEEFFKKHPRLRGIGLFFVILIPICLAATAGYYVYNHWDGKFGRIRLGETGSGGLFDRDSLLVSIPVSMVAGVVAVITALPLLVSSLWRSVSGYVRVPGGASSRRPYSSRDSFAARRSDYVGVVEDEDELLGTDDFDDDEEGDERNGQV</sequence>